<keyword id="KW-0963">Cytoplasm</keyword>
<keyword id="KW-0460">Magnesium</keyword>
<keyword id="KW-0479">Metal-binding</keyword>
<keyword id="KW-0566">Pantothenate biosynthesis</keyword>
<keyword id="KW-0808">Transferase</keyword>
<accession>A2CB80</accession>
<comment type="function">
    <text evidence="1">Catalyzes the reversible reaction in which hydroxymethyl group from 5,10-methylenetetrahydrofolate is transferred onto alpha-ketoisovalerate to form ketopantoate.</text>
</comment>
<comment type="catalytic activity">
    <reaction evidence="1">
        <text>3-methyl-2-oxobutanoate + (6R)-5,10-methylene-5,6,7,8-tetrahydrofolate + H2O = 2-dehydropantoate + (6S)-5,6,7,8-tetrahydrofolate</text>
        <dbReference type="Rhea" id="RHEA:11824"/>
        <dbReference type="ChEBI" id="CHEBI:11561"/>
        <dbReference type="ChEBI" id="CHEBI:11851"/>
        <dbReference type="ChEBI" id="CHEBI:15377"/>
        <dbReference type="ChEBI" id="CHEBI:15636"/>
        <dbReference type="ChEBI" id="CHEBI:57453"/>
        <dbReference type="EC" id="2.1.2.11"/>
    </reaction>
</comment>
<comment type="cofactor">
    <cofactor evidence="1">
        <name>Mg(2+)</name>
        <dbReference type="ChEBI" id="CHEBI:18420"/>
    </cofactor>
    <text evidence="1">Binds 1 Mg(2+) ion per subunit.</text>
</comment>
<comment type="pathway">
    <text evidence="1">Cofactor biosynthesis; (R)-pantothenate biosynthesis; (R)-pantoate from 3-methyl-2-oxobutanoate: step 1/2.</text>
</comment>
<comment type="subunit">
    <text evidence="1">Homodecamer; pentamer of dimers.</text>
</comment>
<comment type="subcellular location">
    <subcellularLocation>
        <location evidence="1">Cytoplasm</location>
    </subcellularLocation>
</comment>
<comment type="similarity">
    <text evidence="1">Belongs to the PanB family.</text>
</comment>
<name>PANB_PROM3</name>
<dbReference type="EC" id="2.1.2.11" evidence="1"/>
<dbReference type="EMBL" id="CP000554">
    <property type="protein sequence ID" value="ABM78740.1"/>
    <property type="molecule type" value="Genomic_DNA"/>
</dbReference>
<dbReference type="RefSeq" id="WP_011826620.1">
    <property type="nucleotide sequence ID" value="NC_008820.1"/>
</dbReference>
<dbReference type="SMR" id="A2CB80"/>
<dbReference type="STRING" id="59922.P9303_19981"/>
<dbReference type="KEGG" id="pmf:P9303_19981"/>
<dbReference type="HOGENOM" id="CLU_036645_1_0_3"/>
<dbReference type="BioCyc" id="PMAR59922:G1G80-1739-MONOMER"/>
<dbReference type="UniPathway" id="UPA00028">
    <property type="reaction ID" value="UER00003"/>
</dbReference>
<dbReference type="Proteomes" id="UP000002274">
    <property type="component" value="Chromosome"/>
</dbReference>
<dbReference type="GO" id="GO:0005737">
    <property type="term" value="C:cytoplasm"/>
    <property type="evidence" value="ECO:0007669"/>
    <property type="project" value="UniProtKB-SubCell"/>
</dbReference>
<dbReference type="GO" id="GO:0003864">
    <property type="term" value="F:3-methyl-2-oxobutanoate hydroxymethyltransferase activity"/>
    <property type="evidence" value="ECO:0007669"/>
    <property type="project" value="UniProtKB-UniRule"/>
</dbReference>
<dbReference type="GO" id="GO:0000287">
    <property type="term" value="F:magnesium ion binding"/>
    <property type="evidence" value="ECO:0007669"/>
    <property type="project" value="TreeGrafter"/>
</dbReference>
<dbReference type="GO" id="GO:0015940">
    <property type="term" value="P:pantothenate biosynthetic process"/>
    <property type="evidence" value="ECO:0007669"/>
    <property type="project" value="UniProtKB-UniRule"/>
</dbReference>
<dbReference type="CDD" id="cd06557">
    <property type="entry name" value="KPHMT-like"/>
    <property type="match status" value="1"/>
</dbReference>
<dbReference type="Gene3D" id="3.20.20.60">
    <property type="entry name" value="Phosphoenolpyruvate-binding domains"/>
    <property type="match status" value="1"/>
</dbReference>
<dbReference type="HAMAP" id="MF_00156">
    <property type="entry name" value="PanB"/>
    <property type="match status" value="1"/>
</dbReference>
<dbReference type="InterPro" id="IPR003700">
    <property type="entry name" value="Pantoate_hydroxy_MeTrfase"/>
</dbReference>
<dbReference type="InterPro" id="IPR015813">
    <property type="entry name" value="Pyrv/PenolPyrv_kinase-like_dom"/>
</dbReference>
<dbReference type="InterPro" id="IPR040442">
    <property type="entry name" value="Pyrv_kinase-like_dom_sf"/>
</dbReference>
<dbReference type="NCBIfam" id="TIGR00222">
    <property type="entry name" value="panB"/>
    <property type="match status" value="1"/>
</dbReference>
<dbReference type="NCBIfam" id="NF001452">
    <property type="entry name" value="PRK00311.1"/>
    <property type="match status" value="1"/>
</dbReference>
<dbReference type="PANTHER" id="PTHR20881">
    <property type="entry name" value="3-METHYL-2-OXOBUTANOATE HYDROXYMETHYLTRANSFERASE"/>
    <property type="match status" value="1"/>
</dbReference>
<dbReference type="PANTHER" id="PTHR20881:SF0">
    <property type="entry name" value="3-METHYL-2-OXOBUTANOATE HYDROXYMETHYLTRANSFERASE"/>
    <property type="match status" value="1"/>
</dbReference>
<dbReference type="Pfam" id="PF02548">
    <property type="entry name" value="Pantoate_transf"/>
    <property type="match status" value="1"/>
</dbReference>
<dbReference type="PIRSF" id="PIRSF000388">
    <property type="entry name" value="Pantoate_hydroxy_MeTrfase"/>
    <property type="match status" value="1"/>
</dbReference>
<dbReference type="SUPFAM" id="SSF51621">
    <property type="entry name" value="Phosphoenolpyruvate/pyruvate domain"/>
    <property type="match status" value="1"/>
</dbReference>
<reference key="1">
    <citation type="journal article" date="2007" name="PLoS Genet.">
        <title>Patterns and implications of gene gain and loss in the evolution of Prochlorococcus.</title>
        <authorList>
            <person name="Kettler G.C."/>
            <person name="Martiny A.C."/>
            <person name="Huang K."/>
            <person name="Zucker J."/>
            <person name="Coleman M.L."/>
            <person name="Rodrigue S."/>
            <person name="Chen F."/>
            <person name="Lapidus A."/>
            <person name="Ferriera S."/>
            <person name="Johnson J."/>
            <person name="Steglich C."/>
            <person name="Church G.M."/>
            <person name="Richardson P."/>
            <person name="Chisholm S.W."/>
        </authorList>
    </citation>
    <scope>NUCLEOTIDE SEQUENCE [LARGE SCALE GENOMIC DNA]</scope>
    <source>
        <strain>MIT 9303</strain>
    </source>
</reference>
<protein>
    <recommendedName>
        <fullName evidence="1">3-methyl-2-oxobutanoate hydroxymethyltransferase</fullName>
        <ecNumber evidence="1">2.1.2.11</ecNumber>
    </recommendedName>
    <alternativeName>
        <fullName evidence="1">Ketopantoate hydroxymethyltransferase</fullName>
        <shortName evidence="1">KPHMT</shortName>
    </alternativeName>
</protein>
<evidence type="ECO:0000255" key="1">
    <source>
        <dbReference type="HAMAP-Rule" id="MF_00156"/>
    </source>
</evidence>
<organism>
    <name type="scientific">Prochlorococcus marinus (strain MIT 9303)</name>
    <dbReference type="NCBI Taxonomy" id="59922"/>
    <lineage>
        <taxon>Bacteria</taxon>
        <taxon>Bacillati</taxon>
        <taxon>Cyanobacteriota</taxon>
        <taxon>Cyanophyceae</taxon>
        <taxon>Synechococcales</taxon>
        <taxon>Prochlorococcaceae</taxon>
        <taxon>Prochlorococcus</taxon>
    </lineage>
</organism>
<proteinExistence type="inferred from homology"/>
<gene>
    <name evidence="1" type="primary">panB</name>
    <name type="ordered locus">P9303_19981</name>
</gene>
<sequence length="272" mass="28950">MRPSELTQLKQDGRAISILTAWDGLSAALVEAAGADVVLVGDSLAMVALCHATTLPVTVEQMLHHTQAVGRGFTRPLPQQPLVVCDLPFLSYQCGEDKAVAAAGSLLKHSCAAAVKLEGAEPEVLAVIERLVRMGIPVMGHLGLTPQAVHRLGYRRQAEDPRSQAQMLQQAKQLEQAGCFALVVEHVPSSIARCLSQQLTIPVIGIGAGEDCDGQVRVTADLLGLTPSQPPFSPPLIQGRQLCVEALQGWVKQLHQQAETATTTTSQPEPDC</sequence>
<feature type="chain" id="PRO_0000297324" description="3-methyl-2-oxobutanoate hydroxymethyltransferase">
    <location>
        <begin position="1"/>
        <end position="272"/>
    </location>
</feature>
<feature type="active site" description="Proton acceptor" evidence="1">
    <location>
        <position position="185"/>
    </location>
</feature>
<feature type="binding site" evidence="1">
    <location>
        <begin position="42"/>
        <end position="43"/>
    </location>
    <ligand>
        <name>3-methyl-2-oxobutanoate</name>
        <dbReference type="ChEBI" id="CHEBI:11851"/>
    </ligand>
</feature>
<feature type="binding site" evidence="1">
    <location>
        <position position="42"/>
    </location>
    <ligand>
        <name>Mg(2+)</name>
        <dbReference type="ChEBI" id="CHEBI:18420"/>
    </ligand>
</feature>
<feature type="binding site" evidence="1">
    <location>
        <position position="86"/>
    </location>
    <ligand>
        <name>3-methyl-2-oxobutanoate</name>
        <dbReference type="ChEBI" id="CHEBI:11851"/>
    </ligand>
</feature>
<feature type="binding site" evidence="1">
    <location>
        <position position="86"/>
    </location>
    <ligand>
        <name>Mg(2+)</name>
        <dbReference type="ChEBI" id="CHEBI:18420"/>
    </ligand>
</feature>
<feature type="binding site" evidence="1">
    <location>
        <position position="116"/>
    </location>
    <ligand>
        <name>3-methyl-2-oxobutanoate</name>
        <dbReference type="ChEBI" id="CHEBI:11851"/>
    </ligand>
</feature>
<feature type="binding site" evidence="1">
    <location>
        <position position="118"/>
    </location>
    <ligand>
        <name>Mg(2+)</name>
        <dbReference type="ChEBI" id="CHEBI:18420"/>
    </ligand>
</feature>